<accession>A4Y6S2</accession>
<gene>
    <name evidence="1" type="primary">cmoB</name>
    <name type="ordered locus">Sputcn32_1932</name>
</gene>
<name>CMOB_SHEPC</name>
<keyword id="KW-0808">Transferase</keyword>
<keyword id="KW-0819">tRNA processing</keyword>
<sequence length="332" mass="38003">MISFSSFYQQIADSNLQHWLETLPSILGKWQRDHKHGNLPKWEKVLNKLHYPAPDQVDFVDSVTVGSGEQLSPGEKEKLENLLRLFMPWRKGPFHIHGIHIDTEWRSDWKWDRVKQHISPLKNRTVLDVGCGSGYHMWRMLGSGAKRVVGIDPSPLFLCQFEAVKRLAGPHHPVHLLPLGIEELPPLDAFDTVFSMGVLYHRRSPIDHLLQLRDQLRTGGELVLETLVIDGDENAVLVPQDRYGKMNNVWFIPSVAALMLWLKKCDFTDIRCVDTDVTALAEQRRTDWMPNESLVEYLDPNDITKTVEGYPAPKRATIIAIKNQPNQETVNG</sequence>
<protein>
    <recommendedName>
        <fullName evidence="1">tRNA U34 carboxymethyltransferase</fullName>
        <ecNumber evidence="1">2.5.1.-</ecNumber>
    </recommendedName>
</protein>
<organism>
    <name type="scientific">Shewanella putrefaciens (strain CN-32 / ATCC BAA-453)</name>
    <dbReference type="NCBI Taxonomy" id="319224"/>
    <lineage>
        <taxon>Bacteria</taxon>
        <taxon>Pseudomonadati</taxon>
        <taxon>Pseudomonadota</taxon>
        <taxon>Gammaproteobacteria</taxon>
        <taxon>Alteromonadales</taxon>
        <taxon>Shewanellaceae</taxon>
        <taxon>Shewanella</taxon>
    </lineage>
</organism>
<reference key="1">
    <citation type="submission" date="2007-04" db="EMBL/GenBank/DDBJ databases">
        <title>Complete sequence of Shewanella putrefaciens CN-32.</title>
        <authorList>
            <consortium name="US DOE Joint Genome Institute"/>
            <person name="Copeland A."/>
            <person name="Lucas S."/>
            <person name="Lapidus A."/>
            <person name="Barry K."/>
            <person name="Detter J.C."/>
            <person name="Glavina del Rio T."/>
            <person name="Hammon N."/>
            <person name="Israni S."/>
            <person name="Dalin E."/>
            <person name="Tice H."/>
            <person name="Pitluck S."/>
            <person name="Chain P."/>
            <person name="Malfatti S."/>
            <person name="Shin M."/>
            <person name="Vergez L."/>
            <person name="Schmutz J."/>
            <person name="Larimer F."/>
            <person name="Land M."/>
            <person name="Hauser L."/>
            <person name="Kyrpides N."/>
            <person name="Mikhailova N."/>
            <person name="Romine M.F."/>
            <person name="Fredrickson J."/>
            <person name="Tiedje J."/>
            <person name="Richardson P."/>
        </authorList>
    </citation>
    <scope>NUCLEOTIDE SEQUENCE [LARGE SCALE GENOMIC DNA]</scope>
    <source>
        <strain>CN-32 / ATCC BAA-453</strain>
    </source>
</reference>
<feature type="chain" id="PRO_0000313970" description="tRNA U34 carboxymethyltransferase">
    <location>
        <begin position="1"/>
        <end position="332"/>
    </location>
</feature>
<feature type="binding site" evidence="1">
    <location>
        <position position="91"/>
    </location>
    <ligand>
        <name>carboxy-S-adenosyl-L-methionine</name>
        <dbReference type="ChEBI" id="CHEBI:134278"/>
    </ligand>
</feature>
<feature type="binding site" evidence="1">
    <location>
        <position position="105"/>
    </location>
    <ligand>
        <name>carboxy-S-adenosyl-L-methionine</name>
        <dbReference type="ChEBI" id="CHEBI:134278"/>
    </ligand>
</feature>
<feature type="binding site" evidence="1">
    <location>
        <position position="110"/>
    </location>
    <ligand>
        <name>carboxy-S-adenosyl-L-methionine</name>
        <dbReference type="ChEBI" id="CHEBI:134278"/>
    </ligand>
</feature>
<feature type="binding site" evidence="1">
    <location>
        <position position="130"/>
    </location>
    <ligand>
        <name>carboxy-S-adenosyl-L-methionine</name>
        <dbReference type="ChEBI" id="CHEBI:134278"/>
    </ligand>
</feature>
<feature type="binding site" evidence="1">
    <location>
        <begin position="152"/>
        <end position="154"/>
    </location>
    <ligand>
        <name>carboxy-S-adenosyl-L-methionine</name>
        <dbReference type="ChEBI" id="CHEBI:134278"/>
    </ligand>
</feature>
<feature type="binding site" evidence="1">
    <location>
        <begin position="181"/>
        <end position="182"/>
    </location>
    <ligand>
        <name>carboxy-S-adenosyl-L-methionine</name>
        <dbReference type="ChEBI" id="CHEBI:134278"/>
    </ligand>
</feature>
<feature type="binding site" evidence="1">
    <location>
        <position position="196"/>
    </location>
    <ligand>
        <name>carboxy-S-adenosyl-L-methionine</name>
        <dbReference type="ChEBI" id="CHEBI:134278"/>
    </ligand>
</feature>
<feature type="binding site" evidence="1">
    <location>
        <position position="200"/>
    </location>
    <ligand>
        <name>carboxy-S-adenosyl-L-methionine</name>
        <dbReference type="ChEBI" id="CHEBI:134278"/>
    </ligand>
</feature>
<feature type="binding site" evidence="1">
    <location>
        <position position="315"/>
    </location>
    <ligand>
        <name>carboxy-S-adenosyl-L-methionine</name>
        <dbReference type="ChEBI" id="CHEBI:134278"/>
    </ligand>
</feature>
<dbReference type="EC" id="2.5.1.-" evidence="1"/>
<dbReference type="EMBL" id="CP000681">
    <property type="protein sequence ID" value="ABP75655.1"/>
    <property type="molecule type" value="Genomic_DNA"/>
</dbReference>
<dbReference type="SMR" id="A4Y6S2"/>
<dbReference type="STRING" id="319224.Sputcn32_1932"/>
<dbReference type="KEGG" id="spc:Sputcn32_1932"/>
<dbReference type="eggNOG" id="COG0500">
    <property type="taxonomic scope" value="Bacteria"/>
</dbReference>
<dbReference type="HOGENOM" id="CLU_052665_0_0_6"/>
<dbReference type="GO" id="GO:0008168">
    <property type="term" value="F:methyltransferase activity"/>
    <property type="evidence" value="ECO:0007669"/>
    <property type="project" value="TreeGrafter"/>
</dbReference>
<dbReference type="GO" id="GO:0016765">
    <property type="term" value="F:transferase activity, transferring alkyl or aryl (other than methyl) groups"/>
    <property type="evidence" value="ECO:0007669"/>
    <property type="project" value="UniProtKB-UniRule"/>
</dbReference>
<dbReference type="GO" id="GO:0002098">
    <property type="term" value="P:tRNA wobble uridine modification"/>
    <property type="evidence" value="ECO:0007669"/>
    <property type="project" value="InterPro"/>
</dbReference>
<dbReference type="CDD" id="cd02440">
    <property type="entry name" value="AdoMet_MTases"/>
    <property type="match status" value="1"/>
</dbReference>
<dbReference type="Gene3D" id="3.40.50.150">
    <property type="entry name" value="Vaccinia Virus protein VP39"/>
    <property type="match status" value="1"/>
</dbReference>
<dbReference type="HAMAP" id="MF_01590">
    <property type="entry name" value="tRNA_carboxymethyltr_CmoB"/>
    <property type="match status" value="1"/>
</dbReference>
<dbReference type="InterPro" id="IPR010017">
    <property type="entry name" value="CmoB"/>
</dbReference>
<dbReference type="InterPro" id="IPR027555">
    <property type="entry name" value="Mo5U34_MeTrfas-like"/>
</dbReference>
<dbReference type="InterPro" id="IPR029063">
    <property type="entry name" value="SAM-dependent_MTases_sf"/>
</dbReference>
<dbReference type="NCBIfam" id="NF011650">
    <property type="entry name" value="PRK15068.1"/>
    <property type="match status" value="1"/>
</dbReference>
<dbReference type="NCBIfam" id="TIGR00452">
    <property type="entry name" value="tRNA 5-methoxyuridine(34)/uridine 5-oxyacetic acid(34) synthase CmoB"/>
    <property type="match status" value="1"/>
</dbReference>
<dbReference type="PANTHER" id="PTHR43464">
    <property type="entry name" value="METHYLTRANSFERASE"/>
    <property type="match status" value="1"/>
</dbReference>
<dbReference type="PANTHER" id="PTHR43464:SF95">
    <property type="entry name" value="TRNA U34 CARBOXYMETHYLTRANSFERASE"/>
    <property type="match status" value="1"/>
</dbReference>
<dbReference type="Pfam" id="PF08003">
    <property type="entry name" value="Methyltransf_9"/>
    <property type="match status" value="1"/>
</dbReference>
<dbReference type="SUPFAM" id="SSF53335">
    <property type="entry name" value="S-adenosyl-L-methionine-dependent methyltransferases"/>
    <property type="match status" value="1"/>
</dbReference>
<proteinExistence type="inferred from homology"/>
<evidence type="ECO:0000255" key="1">
    <source>
        <dbReference type="HAMAP-Rule" id="MF_01590"/>
    </source>
</evidence>
<comment type="function">
    <text evidence="1">Catalyzes carboxymethyl transfer from carboxy-S-adenosyl-L-methionine (Cx-SAM) to 5-hydroxyuridine (ho5U) to form 5-carboxymethoxyuridine (cmo5U) at position 34 in tRNAs.</text>
</comment>
<comment type="catalytic activity">
    <reaction evidence="1">
        <text>carboxy-S-adenosyl-L-methionine + 5-hydroxyuridine(34) in tRNA = 5-carboxymethoxyuridine(34) in tRNA + S-adenosyl-L-homocysteine + H(+)</text>
        <dbReference type="Rhea" id="RHEA:52848"/>
        <dbReference type="Rhea" id="RHEA-COMP:13381"/>
        <dbReference type="Rhea" id="RHEA-COMP:13383"/>
        <dbReference type="ChEBI" id="CHEBI:15378"/>
        <dbReference type="ChEBI" id="CHEBI:57856"/>
        <dbReference type="ChEBI" id="CHEBI:134278"/>
        <dbReference type="ChEBI" id="CHEBI:136877"/>
        <dbReference type="ChEBI" id="CHEBI:136879"/>
    </reaction>
</comment>
<comment type="subunit">
    <text evidence="1">Homotetramer.</text>
</comment>
<comment type="similarity">
    <text evidence="1">Belongs to the class I-like SAM-binding methyltransferase superfamily. CmoB family.</text>
</comment>